<gene>
    <name type="primary">APOC4</name>
</gene>
<reference key="1">
    <citation type="journal article" date="1996" name="J. Biol. Chem.">
        <title>Identification, characterization, cloning, and expression of apolipoprotein C-IV, a novel sialoglycoprotein of rabbit plasma lipoproteins.</title>
        <authorList>
            <person name="Zhang L."/>
            <person name="Kotite L."/>
            <person name="Havel R.J."/>
        </authorList>
    </citation>
    <scope>NUCLEOTIDE SEQUENCE [MRNA]</scope>
    <scope>PROTEIN SEQUENCE OF N-TERMINUS</scope>
    <source>
        <strain>New Zealand</strain>
        <tissue>Liver</tissue>
    </source>
</reference>
<evidence type="ECO:0000269" key="1">
    <source>
    </source>
</evidence>
<evidence type="ECO:0000305" key="2"/>
<comment type="function">
    <text>May participate in lipoprotein metabolism.</text>
</comment>
<comment type="subcellular location">
    <subcellularLocation>
        <location>Secreted</location>
    </subcellularLocation>
</comment>
<comment type="tissue specificity">
    <text>Blood plasma, associated primarily with VLDL and HDL. Expressed mainly in the liver.</text>
</comment>
<comment type="PTM">
    <text>Glycosylated; contains sialic acid. Present in up to five sialylated isoforms.</text>
</comment>
<comment type="similarity">
    <text evidence="2">Belongs to the apolipoprotein C4 family.</text>
</comment>
<organism>
    <name type="scientific">Oryctolagus cuniculus</name>
    <name type="common">Rabbit</name>
    <dbReference type="NCBI Taxonomy" id="9986"/>
    <lineage>
        <taxon>Eukaryota</taxon>
        <taxon>Metazoa</taxon>
        <taxon>Chordata</taxon>
        <taxon>Craniata</taxon>
        <taxon>Vertebrata</taxon>
        <taxon>Euteleostomi</taxon>
        <taxon>Mammalia</taxon>
        <taxon>Eutheria</taxon>
        <taxon>Euarchontoglires</taxon>
        <taxon>Glires</taxon>
        <taxon>Lagomorpha</taxon>
        <taxon>Leporidae</taxon>
        <taxon>Oryctolagus</taxon>
    </lineage>
</organism>
<name>APOC4_RABIT</name>
<protein>
    <recommendedName>
        <fullName>Apolipoprotein C-IV</fullName>
        <shortName>Apo-CIV</shortName>
        <shortName>ApoC-IV</shortName>
    </recommendedName>
    <alternativeName>
        <fullName>Apolipoprotein C4</fullName>
    </alternativeName>
    <alternativeName>
        <fullName>PARP</fullName>
    </alternativeName>
</protein>
<accession>P55057</accession>
<sequence>MLLPRRGLRTLPSLCLYILVLVWVVACEPEGTPTPLPAPEESRWSLVPSSVKELVGPLLTRTRERWQWFWGPGALQGFVQTYYDDHLRDLGPRAQAWLTSSRDRLLNTAQGLCPRLLCGDKDQD</sequence>
<keyword id="KW-0903">Direct protein sequencing</keyword>
<keyword id="KW-0325">Glycoprotein</keyword>
<keyword id="KW-0345">HDL</keyword>
<keyword id="KW-0445">Lipid transport</keyword>
<keyword id="KW-1185">Reference proteome</keyword>
<keyword id="KW-0964">Secreted</keyword>
<keyword id="KW-0732">Signal</keyword>
<keyword id="KW-0813">Transport</keyword>
<keyword id="KW-0850">VLDL</keyword>
<dbReference type="EMBL" id="U39356">
    <property type="protein sequence ID" value="AAC48513.1"/>
    <property type="molecule type" value="mRNA"/>
</dbReference>
<dbReference type="RefSeq" id="NP_001075834.1">
    <property type="nucleotide sequence ID" value="NM_001082365.2"/>
</dbReference>
<dbReference type="FunCoup" id="P55057">
    <property type="interactions" value="11"/>
</dbReference>
<dbReference type="GeneID" id="100009218"/>
<dbReference type="KEGG" id="ocu:100009218"/>
<dbReference type="CTD" id="346"/>
<dbReference type="InParanoid" id="P55057"/>
<dbReference type="OrthoDB" id="9449255at2759"/>
<dbReference type="Proteomes" id="UP000001811">
    <property type="component" value="Unplaced"/>
</dbReference>
<dbReference type="GO" id="GO:0034364">
    <property type="term" value="C:high-density lipoprotein particle"/>
    <property type="evidence" value="ECO:0007669"/>
    <property type="project" value="UniProtKB-KW"/>
</dbReference>
<dbReference type="GO" id="GO:0034361">
    <property type="term" value="C:very-low-density lipoprotein particle"/>
    <property type="evidence" value="ECO:0007669"/>
    <property type="project" value="UniProtKB-KW"/>
</dbReference>
<dbReference type="GO" id="GO:0006869">
    <property type="term" value="P:lipid transport"/>
    <property type="evidence" value="ECO:0007669"/>
    <property type="project" value="UniProtKB-KW"/>
</dbReference>
<dbReference type="GO" id="GO:0010890">
    <property type="term" value="P:positive regulation of triglyceride storage"/>
    <property type="evidence" value="ECO:0007669"/>
    <property type="project" value="TreeGrafter"/>
</dbReference>
<dbReference type="GO" id="GO:0070328">
    <property type="term" value="P:triglyceride homeostasis"/>
    <property type="evidence" value="ECO:0007669"/>
    <property type="project" value="TreeGrafter"/>
</dbReference>
<dbReference type="InterPro" id="IPR028120">
    <property type="entry name" value="APOC4"/>
</dbReference>
<dbReference type="PANTHER" id="PTHR32288">
    <property type="entry name" value="APOLIPOPROTEIN C-IV"/>
    <property type="match status" value="1"/>
</dbReference>
<dbReference type="PANTHER" id="PTHR32288:SF0">
    <property type="entry name" value="APOLIPOPROTEIN C-IV"/>
    <property type="match status" value="1"/>
</dbReference>
<dbReference type="Pfam" id="PF15119">
    <property type="entry name" value="APOC4"/>
    <property type="match status" value="1"/>
</dbReference>
<feature type="signal peptide" evidence="1">
    <location>
        <begin position="1"/>
        <end position="27"/>
    </location>
</feature>
<feature type="chain" id="PRO_0000002038" description="Apolipoprotein C-IV">
    <location>
        <begin position="28"/>
        <end position="124"/>
    </location>
</feature>
<proteinExistence type="evidence at protein level"/>